<comment type="function">
    <text evidence="1">Aspartyl-tRNA synthetase with relaxed tRNA specificity since it is able to aspartylate not only its cognate tRNA(Asp) but also tRNA(Asn). Reaction proceeds in two steps: L-aspartate is first activated by ATP to form Asp-AMP and then transferred to the acceptor end of tRNA(Asp/Asn).</text>
</comment>
<comment type="catalytic activity">
    <reaction evidence="1">
        <text>tRNA(Asx) + L-aspartate + ATP = L-aspartyl-tRNA(Asx) + AMP + diphosphate</text>
        <dbReference type="Rhea" id="RHEA:18349"/>
        <dbReference type="Rhea" id="RHEA-COMP:9710"/>
        <dbReference type="Rhea" id="RHEA-COMP:9711"/>
        <dbReference type="ChEBI" id="CHEBI:29991"/>
        <dbReference type="ChEBI" id="CHEBI:30616"/>
        <dbReference type="ChEBI" id="CHEBI:33019"/>
        <dbReference type="ChEBI" id="CHEBI:78442"/>
        <dbReference type="ChEBI" id="CHEBI:78516"/>
        <dbReference type="ChEBI" id="CHEBI:456215"/>
        <dbReference type="EC" id="6.1.1.23"/>
    </reaction>
</comment>
<comment type="subunit">
    <text evidence="1">Homodimer.</text>
</comment>
<comment type="subcellular location">
    <subcellularLocation>
        <location evidence="1">Cytoplasm</location>
    </subcellularLocation>
</comment>
<comment type="similarity">
    <text evidence="1">Belongs to the class-II aminoacyl-tRNA synthetase family. Type 1 subfamily.</text>
</comment>
<keyword id="KW-0030">Aminoacyl-tRNA synthetase</keyword>
<keyword id="KW-0067">ATP-binding</keyword>
<keyword id="KW-0963">Cytoplasm</keyword>
<keyword id="KW-0436">Ligase</keyword>
<keyword id="KW-0547">Nucleotide-binding</keyword>
<keyword id="KW-0648">Protein biosynthesis</keyword>
<protein>
    <recommendedName>
        <fullName evidence="1">Aspartate--tRNA(Asp/Asn) ligase</fullName>
        <ecNumber evidence="1">6.1.1.23</ecNumber>
    </recommendedName>
    <alternativeName>
        <fullName evidence="1">Aspartyl-tRNA synthetase</fullName>
        <shortName evidence="1">AspRS</shortName>
    </alternativeName>
    <alternativeName>
        <fullName evidence="1">Non-discriminating aspartyl-tRNA synthetase</fullName>
        <shortName evidence="1">ND-AspRS</shortName>
    </alternativeName>
</protein>
<reference key="1">
    <citation type="journal article" date="2011" name="J. Bacteriol.">
        <title>Complete genome sequence of the plant growth-promoting endophyte Burkholderia phytofirmans strain PsJN.</title>
        <authorList>
            <person name="Weilharter A."/>
            <person name="Mitter B."/>
            <person name="Shin M.V."/>
            <person name="Chain P.S."/>
            <person name="Nowak J."/>
            <person name="Sessitsch A."/>
        </authorList>
    </citation>
    <scope>NUCLEOTIDE SEQUENCE [LARGE SCALE GENOMIC DNA]</scope>
    <source>
        <strain>DSM 17436 / LMG 22146 / PsJN</strain>
    </source>
</reference>
<dbReference type="EC" id="6.1.1.23" evidence="1"/>
<dbReference type="EMBL" id="CP001052">
    <property type="protein sequence ID" value="ACD15081.1"/>
    <property type="molecule type" value="Genomic_DNA"/>
</dbReference>
<dbReference type="RefSeq" id="WP_012431718.1">
    <property type="nucleotide sequence ID" value="NC_010681.1"/>
</dbReference>
<dbReference type="SMR" id="B2SX42"/>
<dbReference type="STRING" id="398527.Bphyt_0656"/>
<dbReference type="KEGG" id="bpy:Bphyt_0656"/>
<dbReference type="eggNOG" id="COG0173">
    <property type="taxonomic scope" value="Bacteria"/>
</dbReference>
<dbReference type="HOGENOM" id="CLU_014330_3_2_4"/>
<dbReference type="OrthoDB" id="9802326at2"/>
<dbReference type="Proteomes" id="UP000001739">
    <property type="component" value="Chromosome 1"/>
</dbReference>
<dbReference type="GO" id="GO:0005737">
    <property type="term" value="C:cytoplasm"/>
    <property type="evidence" value="ECO:0007669"/>
    <property type="project" value="UniProtKB-SubCell"/>
</dbReference>
<dbReference type="GO" id="GO:0004815">
    <property type="term" value="F:aspartate-tRNA ligase activity"/>
    <property type="evidence" value="ECO:0007669"/>
    <property type="project" value="UniProtKB-UniRule"/>
</dbReference>
<dbReference type="GO" id="GO:0050560">
    <property type="term" value="F:aspartate-tRNA(Asn) ligase activity"/>
    <property type="evidence" value="ECO:0007669"/>
    <property type="project" value="UniProtKB-EC"/>
</dbReference>
<dbReference type="GO" id="GO:0005524">
    <property type="term" value="F:ATP binding"/>
    <property type="evidence" value="ECO:0007669"/>
    <property type="project" value="UniProtKB-UniRule"/>
</dbReference>
<dbReference type="GO" id="GO:0003676">
    <property type="term" value="F:nucleic acid binding"/>
    <property type="evidence" value="ECO:0007669"/>
    <property type="project" value="InterPro"/>
</dbReference>
<dbReference type="GO" id="GO:0006422">
    <property type="term" value="P:aspartyl-tRNA aminoacylation"/>
    <property type="evidence" value="ECO:0007669"/>
    <property type="project" value="UniProtKB-UniRule"/>
</dbReference>
<dbReference type="CDD" id="cd00777">
    <property type="entry name" value="AspRS_core"/>
    <property type="match status" value="1"/>
</dbReference>
<dbReference type="CDD" id="cd04317">
    <property type="entry name" value="EcAspRS_like_N"/>
    <property type="match status" value="1"/>
</dbReference>
<dbReference type="Gene3D" id="3.30.930.10">
    <property type="entry name" value="Bira Bifunctional Protein, Domain 2"/>
    <property type="match status" value="1"/>
</dbReference>
<dbReference type="Gene3D" id="3.30.1360.30">
    <property type="entry name" value="GAD-like domain"/>
    <property type="match status" value="1"/>
</dbReference>
<dbReference type="Gene3D" id="2.40.50.140">
    <property type="entry name" value="Nucleic acid-binding proteins"/>
    <property type="match status" value="1"/>
</dbReference>
<dbReference type="HAMAP" id="MF_00044">
    <property type="entry name" value="Asp_tRNA_synth_type1"/>
    <property type="match status" value="1"/>
</dbReference>
<dbReference type="InterPro" id="IPR004364">
    <property type="entry name" value="Aa-tRNA-synt_II"/>
</dbReference>
<dbReference type="InterPro" id="IPR006195">
    <property type="entry name" value="aa-tRNA-synth_II"/>
</dbReference>
<dbReference type="InterPro" id="IPR045864">
    <property type="entry name" value="aa-tRNA-synth_II/BPL/LPL"/>
</dbReference>
<dbReference type="InterPro" id="IPR004524">
    <property type="entry name" value="Asp-tRNA-ligase_1"/>
</dbReference>
<dbReference type="InterPro" id="IPR047089">
    <property type="entry name" value="Asp-tRNA-ligase_1_N"/>
</dbReference>
<dbReference type="InterPro" id="IPR002312">
    <property type="entry name" value="Asp/Asn-tRNA-synth_IIb"/>
</dbReference>
<dbReference type="InterPro" id="IPR047090">
    <property type="entry name" value="AspRS_core"/>
</dbReference>
<dbReference type="InterPro" id="IPR004115">
    <property type="entry name" value="GAD-like_sf"/>
</dbReference>
<dbReference type="InterPro" id="IPR029351">
    <property type="entry name" value="GAD_dom"/>
</dbReference>
<dbReference type="InterPro" id="IPR012340">
    <property type="entry name" value="NA-bd_OB-fold"/>
</dbReference>
<dbReference type="InterPro" id="IPR004365">
    <property type="entry name" value="NA-bd_OB_tRNA"/>
</dbReference>
<dbReference type="NCBIfam" id="TIGR00459">
    <property type="entry name" value="aspS_bact"/>
    <property type="match status" value="1"/>
</dbReference>
<dbReference type="NCBIfam" id="NF001750">
    <property type="entry name" value="PRK00476.1"/>
    <property type="match status" value="1"/>
</dbReference>
<dbReference type="PANTHER" id="PTHR22594:SF5">
    <property type="entry name" value="ASPARTATE--TRNA LIGASE, MITOCHONDRIAL"/>
    <property type="match status" value="1"/>
</dbReference>
<dbReference type="PANTHER" id="PTHR22594">
    <property type="entry name" value="ASPARTYL/LYSYL-TRNA SYNTHETASE"/>
    <property type="match status" value="1"/>
</dbReference>
<dbReference type="Pfam" id="PF02938">
    <property type="entry name" value="GAD"/>
    <property type="match status" value="1"/>
</dbReference>
<dbReference type="Pfam" id="PF00152">
    <property type="entry name" value="tRNA-synt_2"/>
    <property type="match status" value="1"/>
</dbReference>
<dbReference type="Pfam" id="PF01336">
    <property type="entry name" value="tRNA_anti-codon"/>
    <property type="match status" value="1"/>
</dbReference>
<dbReference type="PRINTS" id="PR01042">
    <property type="entry name" value="TRNASYNTHASP"/>
</dbReference>
<dbReference type="SUPFAM" id="SSF55681">
    <property type="entry name" value="Class II aaRS and biotin synthetases"/>
    <property type="match status" value="1"/>
</dbReference>
<dbReference type="SUPFAM" id="SSF55261">
    <property type="entry name" value="GAD domain-like"/>
    <property type="match status" value="1"/>
</dbReference>
<dbReference type="SUPFAM" id="SSF50249">
    <property type="entry name" value="Nucleic acid-binding proteins"/>
    <property type="match status" value="1"/>
</dbReference>
<dbReference type="PROSITE" id="PS50862">
    <property type="entry name" value="AA_TRNA_LIGASE_II"/>
    <property type="match status" value="1"/>
</dbReference>
<evidence type="ECO:0000255" key="1">
    <source>
        <dbReference type="HAMAP-Rule" id="MF_00044"/>
    </source>
</evidence>
<name>SYDND_PARPJ</name>
<gene>
    <name evidence="1" type="primary">aspS</name>
    <name type="ordered locus">Bphyt_0656</name>
</gene>
<accession>B2SX42</accession>
<organism>
    <name type="scientific">Paraburkholderia phytofirmans (strain DSM 17436 / LMG 22146 / PsJN)</name>
    <name type="common">Burkholderia phytofirmans</name>
    <dbReference type="NCBI Taxonomy" id="398527"/>
    <lineage>
        <taxon>Bacteria</taxon>
        <taxon>Pseudomonadati</taxon>
        <taxon>Pseudomonadota</taxon>
        <taxon>Betaproteobacteria</taxon>
        <taxon>Burkholderiales</taxon>
        <taxon>Burkholderiaceae</taxon>
        <taxon>Paraburkholderia</taxon>
    </lineage>
</organism>
<feature type="chain" id="PRO_1000090972" description="Aspartate--tRNA(Asp/Asn) ligase">
    <location>
        <begin position="1"/>
        <end position="599"/>
    </location>
</feature>
<feature type="region of interest" description="Aspartate" evidence="1">
    <location>
        <begin position="198"/>
        <end position="201"/>
    </location>
</feature>
<feature type="binding site" evidence="1">
    <location>
        <position position="174"/>
    </location>
    <ligand>
        <name>L-aspartate</name>
        <dbReference type="ChEBI" id="CHEBI:29991"/>
    </ligand>
</feature>
<feature type="binding site" evidence="1">
    <location>
        <begin position="220"/>
        <end position="222"/>
    </location>
    <ligand>
        <name>ATP</name>
        <dbReference type="ChEBI" id="CHEBI:30616"/>
    </ligand>
</feature>
<feature type="binding site" evidence="1">
    <location>
        <position position="220"/>
    </location>
    <ligand>
        <name>L-aspartate</name>
        <dbReference type="ChEBI" id="CHEBI:29991"/>
    </ligand>
</feature>
<feature type="binding site" evidence="1">
    <location>
        <position position="229"/>
    </location>
    <ligand>
        <name>ATP</name>
        <dbReference type="ChEBI" id="CHEBI:30616"/>
    </ligand>
</feature>
<feature type="binding site" evidence="1">
    <location>
        <position position="457"/>
    </location>
    <ligand>
        <name>L-aspartate</name>
        <dbReference type="ChEBI" id="CHEBI:29991"/>
    </ligand>
</feature>
<feature type="binding site" evidence="1">
    <location>
        <position position="491"/>
    </location>
    <ligand>
        <name>ATP</name>
        <dbReference type="ChEBI" id="CHEBI:30616"/>
    </ligand>
</feature>
<feature type="binding site" evidence="1">
    <location>
        <position position="498"/>
    </location>
    <ligand>
        <name>L-aspartate</name>
        <dbReference type="ChEBI" id="CHEBI:29991"/>
    </ligand>
</feature>
<feature type="binding site" evidence="1">
    <location>
        <begin position="543"/>
        <end position="546"/>
    </location>
    <ligand>
        <name>ATP</name>
        <dbReference type="ChEBI" id="CHEBI:30616"/>
    </ligand>
</feature>
<feature type="site" description="Important for tRNA non-discrimination" evidence="1">
    <location>
        <position position="32"/>
    </location>
</feature>
<feature type="site" description="Important for tRNA non-discrimination" evidence="1">
    <location>
        <position position="83"/>
    </location>
</feature>
<proteinExistence type="inferred from homology"/>
<sequence>MSMRSQYCGLVTEELLGQSVSLCGWVSRRRDHGGVIFIDLRDREGLVQVVCDPDRAEMFKAAEGVRNEFCLQIKGVVRGRPEGTTNAALKSGKIEVLCHELIVLNPSITPPFQLDDDNLSETTRLTHRVLDLRRPQMQHNLRLRYRVAIEARKYLDSLGFIDIETPMLTKSTPEGARDYLVPSRTNPGQFFALPQSPQLFKQLLMVANFDRYYQIVKCFRDEDLRADRQPEFTQIDCETSFLSEQEIRDLFEDMIRHVFKETIGVTLDEKFPVMLYSEAMRRFGSDKPDLRVKLEFTDLTDAVRDVDFKVFSTPANTKDGRVAAIRVPKGGELSRGDIDSYTEFVRIYGAKGLAWIKVNEVAKGRDGLQSPIVKNLHDEAVKAIIERTGAQDGDIIFFAADRAKVVNDSLGALRLKIGHSEFGKANGLVETGWKPLWVVDFPMFEYDEEDNRYVAAHHPFTSPKDEHLEYLETDPARCLAKAYDMVLNGWEIGGGSVRIHREEVQSKVFRALKINAEEAQAKFGFLLDALQYGAPPHGGIAFGLDRIVTMMAGADSIRDVIAFPKTQRAQCLLTQAPSEVDERQLRELHIRLRQPEPKV</sequence>